<evidence type="ECO:0000250" key="1">
    <source>
        <dbReference type="UniProtKB" id="P38345"/>
    </source>
</evidence>
<evidence type="ECO:0000256" key="2">
    <source>
        <dbReference type="SAM" id="MobiDB-lite"/>
    </source>
</evidence>
<evidence type="ECO:0000305" key="3"/>
<accession>Q54Y25</accession>
<organism>
    <name type="scientific">Dictyostelium discoideum</name>
    <name type="common">Social amoeba</name>
    <dbReference type="NCBI Taxonomy" id="44689"/>
    <lineage>
        <taxon>Eukaryota</taxon>
        <taxon>Amoebozoa</taxon>
        <taxon>Evosea</taxon>
        <taxon>Eumycetozoa</taxon>
        <taxon>Dictyostelia</taxon>
        <taxon>Dictyosteliales</taxon>
        <taxon>Dictyosteliaceae</taxon>
        <taxon>Dictyostelium</taxon>
    </lineage>
</organism>
<reference key="1">
    <citation type="journal article" date="2005" name="Nature">
        <title>The genome of the social amoeba Dictyostelium discoideum.</title>
        <authorList>
            <person name="Eichinger L."/>
            <person name="Pachebat J.A."/>
            <person name="Gloeckner G."/>
            <person name="Rajandream M.A."/>
            <person name="Sucgang R."/>
            <person name="Berriman M."/>
            <person name="Song J."/>
            <person name="Olsen R."/>
            <person name="Szafranski K."/>
            <person name="Xu Q."/>
            <person name="Tunggal B."/>
            <person name="Kummerfeld S."/>
            <person name="Madera M."/>
            <person name="Konfortov B.A."/>
            <person name="Rivero F."/>
            <person name="Bankier A.T."/>
            <person name="Lehmann R."/>
            <person name="Hamlin N."/>
            <person name="Davies R."/>
            <person name="Gaudet P."/>
            <person name="Fey P."/>
            <person name="Pilcher K."/>
            <person name="Chen G."/>
            <person name="Saunders D."/>
            <person name="Sodergren E.J."/>
            <person name="Davis P."/>
            <person name="Kerhornou A."/>
            <person name="Nie X."/>
            <person name="Hall N."/>
            <person name="Anjard C."/>
            <person name="Hemphill L."/>
            <person name="Bason N."/>
            <person name="Farbrother P."/>
            <person name="Desany B."/>
            <person name="Just E."/>
            <person name="Morio T."/>
            <person name="Rost R."/>
            <person name="Churcher C.M."/>
            <person name="Cooper J."/>
            <person name="Haydock S."/>
            <person name="van Driessche N."/>
            <person name="Cronin A."/>
            <person name="Goodhead I."/>
            <person name="Muzny D.M."/>
            <person name="Mourier T."/>
            <person name="Pain A."/>
            <person name="Lu M."/>
            <person name="Harper D."/>
            <person name="Lindsay R."/>
            <person name="Hauser H."/>
            <person name="James K.D."/>
            <person name="Quiles M."/>
            <person name="Madan Babu M."/>
            <person name="Saito T."/>
            <person name="Buchrieser C."/>
            <person name="Wardroper A."/>
            <person name="Felder M."/>
            <person name="Thangavelu M."/>
            <person name="Johnson D."/>
            <person name="Knights A."/>
            <person name="Loulseged H."/>
            <person name="Mungall K.L."/>
            <person name="Oliver K."/>
            <person name="Price C."/>
            <person name="Quail M.A."/>
            <person name="Urushihara H."/>
            <person name="Hernandez J."/>
            <person name="Rabbinowitsch E."/>
            <person name="Steffen D."/>
            <person name="Sanders M."/>
            <person name="Ma J."/>
            <person name="Kohara Y."/>
            <person name="Sharp S."/>
            <person name="Simmonds M.N."/>
            <person name="Spiegler S."/>
            <person name="Tivey A."/>
            <person name="Sugano S."/>
            <person name="White B."/>
            <person name="Walker D."/>
            <person name="Woodward J.R."/>
            <person name="Winckler T."/>
            <person name="Tanaka Y."/>
            <person name="Shaulsky G."/>
            <person name="Schleicher M."/>
            <person name="Weinstock G.M."/>
            <person name="Rosenthal A."/>
            <person name="Cox E.C."/>
            <person name="Chisholm R.L."/>
            <person name="Gibbs R.A."/>
            <person name="Loomis W.F."/>
            <person name="Platzer M."/>
            <person name="Kay R.R."/>
            <person name="Williams J.G."/>
            <person name="Dear P.H."/>
            <person name="Noegel A.A."/>
            <person name="Barrell B.G."/>
            <person name="Kuspa A."/>
        </authorList>
    </citation>
    <scope>NUCLEOTIDE SEQUENCE [LARGE SCALE GENOMIC DNA]</scope>
    <source>
        <strain>AX4</strain>
    </source>
</reference>
<name>SDHF4_DICDI</name>
<proteinExistence type="inferred from homology"/>
<sequence length="108" mass="12595">MNNLISKFNKIIYLNATKQTNKINCSFYSTTINNNNNNNNNNNNNNISNKKAEMSKENQQLLQDLEEEFDEDEFKPYVNPITKEIGGPKGPEPTRYNDWERNGRVSDF</sequence>
<dbReference type="EMBL" id="AAFI02000023">
    <property type="protein sequence ID" value="EAL68402.1"/>
    <property type="molecule type" value="Genomic_DNA"/>
</dbReference>
<dbReference type="RefSeq" id="XP_642377.1">
    <property type="nucleotide sequence ID" value="XM_637285.1"/>
</dbReference>
<dbReference type="SMR" id="Q54Y25"/>
<dbReference type="FunCoup" id="Q54Y25">
    <property type="interactions" value="40"/>
</dbReference>
<dbReference type="STRING" id="44689.Q54Y25"/>
<dbReference type="PaxDb" id="44689-DDB0205467"/>
<dbReference type="EnsemblProtists" id="EAL68402">
    <property type="protein sequence ID" value="EAL68402"/>
    <property type="gene ID" value="DDB_G0278459"/>
</dbReference>
<dbReference type="GeneID" id="8621582"/>
<dbReference type="KEGG" id="ddi:DDB_G0278459"/>
<dbReference type="dictyBase" id="DDB_G0278459"/>
<dbReference type="VEuPathDB" id="AmoebaDB:DDB_G0278459"/>
<dbReference type="eggNOG" id="KOG3245">
    <property type="taxonomic scope" value="Eukaryota"/>
</dbReference>
<dbReference type="HOGENOM" id="CLU_160299_0_2_1"/>
<dbReference type="InParanoid" id="Q54Y25"/>
<dbReference type="OMA" id="THWVESA"/>
<dbReference type="Reactome" id="R-DDI-9854311">
    <property type="pathway name" value="Maturation of TCA enzymes and regulation of TCA cycle"/>
</dbReference>
<dbReference type="PRO" id="PR:Q54Y25"/>
<dbReference type="Proteomes" id="UP000002195">
    <property type="component" value="Chromosome 3"/>
</dbReference>
<dbReference type="GO" id="GO:0005759">
    <property type="term" value="C:mitochondrial matrix"/>
    <property type="evidence" value="ECO:0007669"/>
    <property type="project" value="UniProtKB-SubCell"/>
</dbReference>
<dbReference type="GO" id="GO:0005739">
    <property type="term" value="C:mitochondrion"/>
    <property type="evidence" value="ECO:0000318"/>
    <property type="project" value="GO_Central"/>
</dbReference>
<dbReference type="GO" id="GO:0034553">
    <property type="term" value="P:mitochondrial respiratory chain complex II assembly"/>
    <property type="evidence" value="ECO:0000318"/>
    <property type="project" value="GO_Central"/>
</dbReference>
<dbReference type="InterPro" id="IPR012875">
    <property type="entry name" value="SDHF4"/>
</dbReference>
<dbReference type="PANTHER" id="PTHR28524">
    <property type="entry name" value="SUCCINATE DEHYDROGENASE ASSEMBLY FACTOR 4, MITOCHONDRIAL"/>
    <property type="match status" value="1"/>
</dbReference>
<dbReference type="PANTHER" id="PTHR28524:SF3">
    <property type="entry name" value="SUCCINATE DEHYDROGENASE ASSEMBLY FACTOR 4, MITOCHONDRIAL"/>
    <property type="match status" value="1"/>
</dbReference>
<dbReference type="Pfam" id="PF07896">
    <property type="entry name" value="DUF1674"/>
    <property type="match status" value="1"/>
</dbReference>
<feature type="chain" id="PRO_0000333284" description="Succinate dehydrogenase assembly factor 4, mitochondrial">
    <location>
        <begin position="1"/>
        <end position="108"/>
    </location>
</feature>
<feature type="region of interest" description="Disordered" evidence="2">
    <location>
        <begin position="33"/>
        <end position="59"/>
    </location>
</feature>
<feature type="region of interest" description="Disordered" evidence="2">
    <location>
        <begin position="79"/>
        <end position="108"/>
    </location>
</feature>
<feature type="compositionally biased region" description="Low complexity" evidence="2">
    <location>
        <begin position="33"/>
        <end position="46"/>
    </location>
</feature>
<feature type="compositionally biased region" description="Basic and acidic residues" evidence="2">
    <location>
        <begin position="95"/>
        <end position="108"/>
    </location>
</feature>
<keyword id="KW-0143">Chaperone</keyword>
<keyword id="KW-0496">Mitochondrion</keyword>
<keyword id="KW-1185">Reference proteome</keyword>
<protein>
    <recommendedName>
        <fullName evidence="1">Succinate dehydrogenase assembly factor 4, mitochondrial</fullName>
        <shortName evidence="1">SDH assembly factor 4</shortName>
        <shortName evidence="1">SDHAF4</shortName>
    </recommendedName>
</protein>
<gene>
    <name type="ORF">DDB_G0278459</name>
</gene>
<comment type="function">
    <text evidence="1">Plays an essential role in the assembly of succinate dehydrogenase (SDH), an enzyme complex (also referred to as respiratory complex II) that is a component of both the tricarboxylic acid (TCA) cycle and the mitochondrial electron transport chain, and which couples the oxidation of succinate to fumarate with the reduction of ubiquinone (coenzyme Q) to ubiquinol. Binds to the flavoprotein subunit SdhA in its FAD-bound form, blocking the generation of excess reactive oxygen species (ROS) and facilitating its assembly with the iron-sulfur protein subunit SdhB into the SDH catalytic dimer.</text>
</comment>
<comment type="subunit">
    <text evidence="1">Interacts with SdhA in its FAD-bound form.</text>
</comment>
<comment type="subcellular location">
    <subcellularLocation>
        <location evidence="1">Mitochondrion matrix</location>
    </subcellularLocation>
</comment>
<comment type="similarity">
    <text evidence="3">Belongs to the SDHAF4 family.</text>
</comment>